<gene>
    <name type="primary">CHI3L1</name>
</gene>
<feature type="signal peptide" evidence="12 15">
    <location>
        <begin position="1"/>
        <end position="21"/>
    </location>
</feature>
<feature type="chain" id="PRO_0000011965" description="Chitinase-3-like protein 1">
    <location>
        <begin position="22"/>
        <end position="383"/>
    </location>
</feature>
<feature type="domain" description="GH18" evidence="2">
    <location>
        <begin position="22"/>
        <end position="383"/>
    </location>
</feature>
<feature type="region of interest" description="Important for AKT1 activation and IL8 production" evidence="1">
    <location>
        <begin position="324"/>
        <end position="338"/>
    </location>
</feature>
<feature type="binding site" evidence="2">
    <location>
        <begin position="70"/>
        <end position="71"/>
    </location>
    <ligand>
        <name>chitin</name>
        <dbReference type="ChEBI" id="CHEBI:17029"/>
    </ligand>
</feature>
<feature type="binding site" evidence="2">
    <location>
        <begin position="97"/>
        <end position="100"/>
    </location>
    <ligand>
        <name>chitin</name>
        <dbReference type="ChEBI" id="CHEBI:17029"/>
    </ligand>
</feature>
<feature type="binding site" evidence="2">
    <location>
        <position position="141"/>
    </location>
    <ligand>
        <name>chitin</name>
        <dbReference type="ChEBI" id="CHEBI:17029"/>
    </ligand>
</feature>
<feature type="binding site" evidence="2">
    <location>
        <begin position="204"/>
        <end position="207"/>
    </location>
    <ligand>
        <name>chitin</name>
        <dbReference type="ChEBI" id="CHEBI:17029"/>
    </ligand>
</feature>
<feature type="binding site">
    <location>
        <position position="263"/>
    </location>
    <ligand>
        <name>chitin</name>
        <dbReference type="ChEBI" id="CHEBI:17029"/>
    </ligand>
</feature>
<feature type="binding site" evidence="2">
    <location>
        <position position="352"/>
    </location>
    <ligand>
        <name>chitin</name>
        <dbReference type="ChEBI" id="CHEBI:17029"/>
    </ligand>
</feature>
<feature type="glycosylation site" description="N-linked (GlcNAc...) asparagine" evidence="3">
    <location>
        <position position="60"/>
    </location>
</feature>
<feature type="disulfide bond" evidence="2">
    <location>
        <begin position="26"/>
        <end position="51"/>
    </location>
</feature>
<feature type="disulfide bond">
    <location>
        <begin position="300"/>
        <end position="364"/>
    </location>
</feature>
<feature type="sequence variant" id="VAR_019838" description="In dbSNP:rs880633." evidence="5 16">
    <original>R</original>
    <variation>G</variation>
    <location>
        <position position="145"/>
    </location>
</feature>
<feature type="sequence variant" id="VAR_019839" description="In dbSNP:rs1049407." evidence="13 14">
    <original>I</original>
    <variation>T</variation>
    <location>
        <position position="311"/>
    </location>
</feature>
<feature type="strand" evidence="21">
    <location>
        <begin position="23"/>
        <end position="29"/>
    </location>
</feature>
<feature type="helix" evidence="21">
    <location>
        <begin position="30"/>
        <end position="34"/>
    </location>
</feature>
<feature type="helix" evidence="21">
    <location>
        <begin position="37"/>
        <end position="39"/>
    </location>
</feature>
<feature type="helix" evidence="21">
    <location>
        <begin position="43"/>
        <end position="45"/>
    </location>
</feature>
<feature type="turn" evidence="21">
    <location>
        <begin position="48"/>
        <end position="50"/>
    </location>
</feature>
<feature type="strand" evidence="21">
    <location>
        <begin position="52"/>
        <end position="62"/>
    </location>
</feature>
<feature type="strand" evidence="21">
    <location>
        <begin position="65"/>
        <end position="67"/>
    </location>
</feature>
<feature type="strand" evidence="20">
    <location>
        <begin position="69"/>
        <end position="71"/>
    </location>
</feature>
<feature type="helix" evidence="21">
    <location>
        <begin position="73"/>
        <end position="81"/>
    </location>
</feature>
<feature type="helix" evidence="21">
    <location>
        <begin position="82"/>
        <end position="84"/>
    </location>
</feature>
<feature type="strand" evidence="21">
    <location>
        <begin position="91"/>
        <end position="98"/>
    </location>
</feature>
<feature type="turn" evidence="18">
    <location>
        <begin position="99"/>
        <end position="101"/>
    </location>
</feature>
<feature type="helix" evidence="21">
    <location>
        <begin position="103"/>
        <end position="111"/>
    </location>
</feature>
<feature type="helix" evidence="21">
    <location>
        <begin position="113"/>
        <end position="130"/>
    </location>
</feature>
<feature type="strand" evidence="21">
    <location>
        <begin position="133"/>
        <end position="140"/>
    </location>
</feature>
<feature type="helix" evidence="21">
    <location>
        <begin position="144"/>
        <end position="146"/>
    </location>
</feature>
<feature type="helix" evidence="21">
    <location>
        <begin position="147"/>
        <end position="165"/>
    </location>
</feature>
<feature type="turn" evidence="21">
    <location>
        <begin position="166"/>
        <end position="168"/>
    </location>
</feature>
<feature type="strand" evidence="21">
    <location>
        <begin position="173"/>
        <end position="179"/>
    </location>
</feature>
<feature type="helix" evidence="21">
    <location>
        <begin position="182"/>
        <end position="188"/>
    </location>
</feature>
<feature type="helix" evidence="21">
    <location>
        <begin position="191"/>
        <end position="197"/>
    </location>
</feature>
<feature type="strand" evidence="21">
    <location>
        <begin position="199"/>
        <end position="204"/>
    </location>
</feature>
<feature type="helix" evidence="19">
    <location>
        <begin position="211"/>
        <end position="213"/>
    </location>
</feature>
<feature type="helix" evidence="21">
    <location>
        <begin position="227"/>
        <end position="229"/>
    </location>
</feature>
<feature type="strand" evidence="19">
    <location>
        <begin position="233"/>
        <end position="236"/>
    </location>
</feature>
<feature type="helix" evidence="21">
    <location>
        <begin position="237"/>
        <end position="246"/>
    </location>
</feature>
<feature type="helix" evidence="21">
    <location>
        <begin position="251"/>
        <end position="253"/>
    </location>
</feature>
<feature type="strand" evidence="21">
    <location>
        <begin position="254"/>
        <end position="270"/>
    </location>
</feature>
<feature type="strand" evidence="21">
    <location>
        <begin position="277"/>
        <end position="281"/>
    </location>
</feature>
<feature type="turn" evidence="21">
    <location>
        <begin position="286"/>
        <end position="288"/>
    </location>
</feature>
<feature type="strand" evidence="21">
    <location>
        <begin position="293"/>
        <end position="295"/>
    </location>
</feature>
<feature type="helix" evidence="21">
    <location>
        <begin position="296"/>
        <end position="302"/>
    </location>
</feature>
<feature type="turn" evidence="21">
    <location>
        <begin position="303"/>
        <end position="305"/>
    </location>
</feature>
<feature type="strand" evidence="21">
    <location>
        <begin position="307"/>
        <end position="310"/>
    </location>
</feature>
<feature type="turn" evidence="21">
    <location>
        <begin position="312"/>
        <end position="314"/>
    </location>
</feature>
<feature type="strand" evidence="21">
    <location>
        <begin position="317"/>
        <end position="321"/>
    </location>
</feature>
<feature type="strand" evidence="21">
    <location>
        <begin position="324"/>
        <end position="327"/>
    </location>
</feature>
<feature type="helix" evidence="21">
    <location>
        <begin position="331"/>
        <end position="343"/>
    </location>
</feature>
<feature type="strand" evidence="21">
    <location>
        <begin position="347"/>
        <end position="352"/>
    </location>
</feature>
<feature type="helix" evidence="21">
    <location>
        <begin position="354"/>
        <end position="356"/>
    </location>
</feature>
<feature type="strand" evidence="18">
    <location>
        <begin position="359"/>
        <end position="361"/>
    </location>
</feature>
<feature type="strand" evidence="21">
    <location>
        <begin position="363"/>
        <end position="367"/>
    </location>
</feature>
<feature type="helix" evidence="21">
    <location>
        <begin position="371"/>
        <end position="381"/>
    </location>
</feature>
<accession>P36222</accession>
<accession>B2R7B0</accession>
<accession>P30923</accession>
<accession>Q8IVA4</accession>
<accession>Q96HI7</accession>
<comment type="function">
    <text evidence="6 9 11 15">Carbohydrate-binding lectin with a preference for chitin. Has no chitinase activity. May play a role in tissue remodeling and in the capacity of cells to respond to and cope with changes in their environment. Plays a role in T-helper cell type 2 (Th2) inflammatory response and IL-13-induced inflammation, regulating allergen sensitization, inflammatory cell apoptosis, dendritic cell accumulation and M2 macrophage differentiation. Facilitates invasion of pathogenic enteric bacteria into colonic mucosa and lymphoid organs. Mediates activation of AKT1 signaling pathway and subsequent IL8 production in colonic epithelial cells. Regulates antibacterial responses in lung by contributing to macrophage bacterial killing, controlling bacterial dissemination and augmenting host tolerance. Also regulates hyperoxia-induced injury, inflammation and epithelial apoptosis in lung.</text>
</comment>
<comment type="subunit">
    <text evidence="3 4">Monomer.</text>
</comment>
<comment type="interaction">
    <interactant intactId="EBI-6917454">
        <id>P36222</id>
    </interactant>
    <interactant intactId="EBI-4320063">
        <id>Q14627</id>
        <label>IL13RA2</label>
    </interactant>
    <organismsDiffer>false</organismsDiffer>
    <experiments>9</experiments>
</comment>
<comment type="interaction">
    <interactant intactId="EBI-6917454">
        <id>P36222</id>
    </interactant>
    <interactant intactId="EBI-1170392">
        <id>P17931</id>
        <label>LGALS3</label>
    </interactant>
    <organismsDiffer>false</organismsDiffer>
    <experiments>2</experiments>
</comment>
<comment type="subcellular location">
    <subcellularLocation>
        <location evidence="15">Secreted</location>
        <location evidence="15">Extracellular space</location>
    </subcellularLocation>
    <subcellularLocation>
        <location evidence="1">Cytoplasm</location>
    </subcellularLocation>
    <subcellularLocation>
        <location evidence="1">Cytoplasm</location>
        <location evidence="1">Perinuclear region</location>
    </subcellularLocation>
    <subcellularLocation>
        <location evidence="1">Endoplasmic reticulum</location>
    </subcellularLocation>
</comment>
<comment type="tissue specificity">
    <text evidence="6 15">Present in activated macrophages, articular chondrocytes, synovial cells as well as in liver. Very low or undetectable expression in non-inflammatory colon. Undetectable in muscle tissues, lung, pancreas, mononuclear cells, or fibroblasts.</text>
</comment>
<comment type="induction">
    <text evidence="6 11">Up-regulated in colon under several inflammatory conditions. Down-regulated by hyperoxia in bronchial epithelial cells.</text>
</comment>
<comment type="PTM">
    <text evidence="3">Glycosylated.</text>
</comment>
<comment type="disease" evidence="8">
    <disease id="DI-02871">
        <name>Asthma-related traits 7</name>
        <acronym>ASRT7</acronym>
        <description>Asthma-related traits include clinical symptoms of asthma, such as coughing, wheezing, dyspnea, bronchial hyperresponsiveness as assessed by methacholine challenge test, serum IgE levels, atopy and atopic dermatitis.</description>
        <dbReference type="MIM" id="611960"/>
    </disease>
    <text>Disease susceptibility is associated with variants affecting the gene represented in this entry.</text>
</comment>
<comment type="disease" evidence="7 10">
    <disease id="DI-03626">
        <name>Schizophrenia</name>
        <acronym>SCZD</acronym>
        <description>A complex, multifactorial psychotic disorder or group of disorders characterized by disturbances in the form and content of thought (e.g. delusions, hallucinations), in mood (e.g. inappropriate affect), in sense of self and relationship to the external world (e.g. loss of ego boundaries, withdrawal), and in behavior (e.g bizarre or apparently purposeless behavior). Although it affects emotions, it is distinguished from mood disorders in which such disturbances are primary. Similarly, there may be mild impairment of cognitive function, and it is distinguished from the dementias in which disturbed cognitive function is considered primary. Some patients manifest schizophrenic as well as bipolar disorder symptoms and are often given the diagnosis of schizoaffective disorder.</description>
        <dbReference type="MIM" id="181500"/>
    </disease>
    <text>Disease susceptibility is associated with variants affecting the gene represented in this entry.</text>
</comment>
<comment type="similarity">
    <text evidence="17">Belongs to the glycosyl hydrolase 18 family.</text>
</comment>
<comment type="caution">
    <text evidence="17">Although it belongs to the glycosyl hydrolase 18 family, Leu-140 is present instead of the conserved Glu which is an active site residue. Therefore this protein lacks chitinase activity.</text>
</comment>
<dbReference type="EMBL" id="M80927">
    <property type="protein sequence ID" value="AAA16074.1"/>
    <property type="molecule type" value="mRNA"/>
</dbReference>
<dbReference type="EMBL" id="Y08374">
    <property type="protein sequence ID" value="CAA69661.1"/>
    <property type="molecule type" value="Genomic_DNA"/>
</dbReference>
<dbReference type="EMBL" id="Y08375">
    <property type="protein sequence ID" value="CAA69661.1"/>
    <property type="status" value="JOINED"/>
    <property type="molecule type" value="Genomic_DNA"/>
</dbReference>
<dbReference type="EMBL" id="Y08376">
    <property type="protein sequence ID" value="CAA69661.1"/>
    <property type="status" value="JOINED"/>
    <property type="molecule type" value="Genomic_DNA"/>
</dbReference>
<dbReference type="EMBL" id="Y08377">
    <property type="protein sequence ID" value="CAA69661.1"/>
    <property type="status" value="JOINED"/>
    <property type="molecule type" value="Genomic_DNA"/>
</dbReference>
<dbReference type="EMBL" id="Y08378">
    <property type="protein sequence ID" value="CAA69661.1"/>
    <property type="status" value="JOINED"/>
    <property type="molecule type" value="Genomic_DNA"/>
</dbReference>
<dbReference type="EMBL" id="BT007223">
    <property type="protein sequence ID" value="AAP35887.1"/>
    <property type="molecule type" value="mRNA"/>
</dbReference>
<dbReference type="EMBL" id="AK312911">
    <property type="protein sequence ID" value="BAG35757.1"/>
    <property type="molecule type" value="mRNA"/>
</dbReference>
<dbReference type="EMBL" id="CH471067">
    <property type="protein sequence ID" value="EAW91467.1"/>
    <property type="molecule type" value="Genomic_DNA"/>
</dbReference>
<dbReference type="EMBL" id="BC008568">
    <property type="protein sequence ID" value="AAH08568.1"/>
    <property type="molecule type" value="mRNA"/>
</dbReference>
<dbReference type="EMBL" id="BC038354">
    <property type="protein sequence ID" value="AAH38354.1"/>
    <property type="molecule type" value="mRNA"/>
</dbReference>
<dbReference type="EMBL" id="BC039132">
    <property type="protein sequence ID" value="AAH39132.1"/>
    <property type="molecule type" value="mRNA"/>
</dbReference>
<dbReference type="CCDS" id="CCDS1435.1"/>
<dbReference type="PIR" id="A49562">
    <property type="entry name" value="A49562"/>
</dbReference>
<dbReference type="RefSeq" id="NP_001267.2">
    <property type="nucleotide sequence ID" value="NM_001276.4"/>
</dbReference>
<dbReference type="PDB" id="1HJV">
    <property type="method" value="X-ray"/>
    <property type="resolution" value="2.75 A"/>
    <property type="chains" value="A/B/C/D=22-383"/>
</dbReference>
<dbReference type="PDB" id="1HJW">
    <property type="method" value="X-ray"/>
    <property type="resolution" value="2.30 A"/>
    <property type="chains" value="A/B=22-383"/>
</dbReference>
<dbReference type="PDB" id="1HJX">
    <property type="method" value="X-ray"/>
    <property type="resolution" value="1.85 A"/>
    <property type="chains" value="A/B/C/D=22-383"/>
</dbReference>
<dbReference type="PDB" id="1NWR">
    <property type="method" value="X-ray"/>
    <property type="resolution" value="2.70 A"/>
    <property type="chains" value="A/B/C/D=22-383"/>
</dbReference>
<dbReference type="PDB" id="1NWS">
    <property type="method" value="X-ray"/>
    <property type="resolution" value="2.70 A"/>
    <property type="chains" value="A/B/C/D=22-383"/>
</dbReference>
<dbReference type="PDB" id="1NWT">
    <property type="method" value="X-ray"/>
    <property type="resolution" value="2.50 A"/>
    <property type="chains" value="A/B/C/D=22-383"/>
</dbReference>
<dbReference type="PDB" id="1NWU">
    <property type="method" value="X-ray"/>
    <property type="resolution" value="2.20 A"/>
    <property type="chains" value="A/B/C/D=22-383"/>
</dbReference>
<dbReference type="PDB" id="7CJ2">
    <property type="method" value="X-ray"/>
    <property type="resolution" value="2.70 A"/>
    <property type="chains" value="A/B=22-383"/>
</dbReference>
<dbReference type="PDB" id="8DF1">
    <property type="method" value="X-ray"/>
    <property type="resolution" value="3.30 A"/>
    <property type="chains" value="A/B/C/D/E/F=22-383"/>
</dbReference>
<dbReference type="PDB" id="8R41">
    <property type="method" value="X-ray"/>
    <property type="resolution" value="2.25 A"/>
    <property type="chains" value="A/B=1-383"/>
</dbReference>
<dbReference type="PDB" id="8R42">
    <property type="method" value="X-ray"/>
    <property type="resolution" value="2.32 A"/>
    <property type="chains" value="A/B=1-383"/>
</dbReference>
<dbReference type="PDB" id="8R4X">
    <property type="method" value="X-ray"/>
    <property type="resolution" value="1.54 A"/>
    <property type="chains" value="A/B/C/D=1-383"/>
</dbReference>
<dbReference type="PDBsum" id="1HJV"/>
<dbReference type="PDBsum" id="1HJW"/>
<dbReference type="PDBsum" id="1HJX"/>
<dbReference type="PDBsum" id="1NWR"/>
<dbReference type="PDBsum" id="1NWS"/>
<dbReference type="PDBsum" id="1NWT"/>
<dbReference type="PDBsum" id="1NWU"/>
<dbReference type="PDBsum" id="7CJ2"/>
<dbReference type="PDBsum" id="8DF1"/>
<dbReference type="PDBsum" id="8R41"/>
<dbReference type="PDBsum" id="8R42"/>
<dbReference type="PDBsum" id="8R4X"/>
<dbReference type="SMR" id="P36222"/>
<dbReference type="BioGRID" id="107540">
    <property type="interactions" value="17"/>
</dbReference>
<dbReference type="ComplexPortal" id="CPX-9184">
    <property type="entry name" value="Chitinase 3-like-1-tmem219-interleukin-13 receptor-ligand alpha-2 signalling complex"/>
</dbReference>
<dbReference type="FunCoup" id="P36222">
    <property type="interactions" value="35"/>
</dbReference>
<dbReference type="IntAct" id="P36222">
    <property type="interactions" value="17"/>
</dbReference>
<dbReference type="STRING" id="9606.ENSP00000255409"/>
<dbReference type="BindingDB" id="P36222"/>
<dbReference type="CAZy" id="GH18">
    <property type="family name" value="Glycoside Hydrolase Family 18"/>
</dbReference>
<dbReference type="UniLectin" id="P36222"/>
<dbReference type="GlyCosmos" id="P36222">
    <property type="glycosylation" value="1 site, No reported glycans"/>
</dbReference>
<dbReference type="GlyGen" id="P36222">
    <property type="glycosylation" value="2 sites"/>
</dbReference>
<dbReference type="iPTMnet" id="P36222"/>
<dbReference type="PhosphoSitePlus" id="P36222"/>
<dbReference type="BioMuta" id="CHI3L1"/>
<dbReference type="DMDM" id="84028186"/>
<dbReference type="jPOST" id="P36222"/>
<dbReference type="MassIVE" id="P36222"/>
<dbReference type="PaxDb" id="9606-ENSP00000255409"/>
<dbReference type="PeptideAtlas" id="P36222"/>
<dbReference type="ProteomicsDB" id="55174"/>
<dbReference type="ABCD" id="P36222">
    <property type="antibodies" value="3 sequenced antibodies"/>
</dbReference>
<dbReference type="Antibodypedia" id="34542">
    <property type="antibodies" value="470 antibodies from 39 providers"/>
</dbReference>
<dbReference type="DNASU" id="1116"/>
<dbReference type="Ensembl" id="ENST00000255409.8">
    <property type="protein sequence ID" value="ENSP00000255409.3"/>
    <property type="gene ID" value="ENSG00000133048.13"/>
</dbReference>
<dbReference type="GeneID" id="1116"/>
<dbReference type="KEGG" id="hsa:1116"/>
<dbReference type="MANE-Select" id="ENST00000255409.8">
    <property type="protein sequence ID" value="ENSP00000255409.3"/>
    <property type="RefSeq nucleotide sequence ID" value="NM_001276.4"/>
    <property type="RefSeq protein sequence ID" value="NP_001267.2"/>
</dbReference>
<dbReference type="UCSC" id="uc001gzi.3">
    <property type="organism name" value="human"/>
</dbReference>
<dbReference type="AGR" id="HGNC:1932"/>
<dbReference type="CTD" id="1116"/>
<dbReference type="DisGeNET" id="1116"/>
<dbReference type="GeneCards" id="CHI3L1"/>
<dbReference type="HGNC" id="HGNC:1932">
    <property type="gene designation" value="CHI3L1"/>
</dbReference>
<dbReference type="HPA" id="ENSG00000133048">
    <property type="expression patterns" value="Tissue enhanced (choroid plexus, liver)"/>
</dbReference>
<dbReference type="MalaCards" id="CHI3L1"/>
<dbReference type="MIM" id="181500">
    <property type="type" value="phenotype"/>
</dbReference>
<dbReference type="MIM" id="601525">
    <property type="type" value="gene"/>
</dbReference>
<dbReference type="MIM" id="611960">
    <property type="type" value="phenotype"/>
</dbReference>
<dbReference type="neXtProt" id="NX_P36222"/>
<dbReference type="OpenTargets" id="ENSG00000133048"/>
<dbReference type="PharmGKB" id="PA26463"/>
<dbReference type="VEuPathDB" id="HostDB:ENSG00000133048"/>
<dbReference type="eggNOG" id="KOG2806">
    <property type="taxonomic scope" value="Eukaryota"/>
</dbReference>
<dbReference type="GeneTree" id="ENSGT00940000161815"/>
<dbReference type="HOGENOM" id="CLU_002833_3_1_1"/>
<dbReference type="InParanoid" id="P36222"/>
<dbReference type="OMA" id="FYYCSGG"/>
<dbReference type="OrthoDB" id="76388at2759"/>
<dbReference type="PAN-GO" id="P36222">
    <property type="GO annotations" value="3 GO annotations based on evolutionary models"/>
</dbReference>
<dbReference type="PhylomeDB" id="P36222"/>
<dbReference type="TreeFam" id="TF315610"/>
<dbReference type="PathwayCommons" id="P36222"/>
<dbReference type="Reactome" id="R-HSA-6798695">
    <property type="pathway name" value="Neutrophil degranulation"/>
</dbReference>
<dbReference type="SignaLink" id="P36222"/>
<dbReference type="SIGNOR" id="P36222"/>
<dbReference type="BioGRID-ORCS" id="1116">
    <property type="hits" value="11 hits in 1144 CRISPR screens"/>
</dbReference>
<dbReference type="ChiTaRS" id="CHI3L1">
    <property type="organism name" value="human"/>
</dbReference>
<dbReference type="EvolutionaryTrace" id="P36222"/>
<dbReference type="GeneWiki" id="CHI3L1"/>
<dbReference type="GenomeRNAi" id="1116"/>
<dbReference type="Pharos" id="P36222">
    <property type="development level" value="Tbio"/>
</dbReference>
<dbReference type="PRO" id="PR:P36222"/>
<dbReference type="Proteomes" id="UP000005640">
    <property type="component" value="Chromosome 1"/>
</dbReference>
<dbReference type="RNAct" id="P36222">
    <property type="molecule type" value="protein"/>
</dbReference>
<dbReference type="Bgee" id="ENSG00000133048">
    <property type="expression patterns" value="Expressed in pericardium and 182 other cell types or tissues"/>
</dbReference>
<dbReference type="ExpressionAtlas" id="P36222">
    <property type="expression patterns" value="baseline and differential"/>
</dbReference>
<dbReference type="GO" id="GO:0005737">
    <property type="term" value="C:cytoplasm"/>
    <property type="evidence" value="ECO:0000250"/>
    <property type="project" value="UniProtKB"/>
</dbReference>
<dbReference type="GO" id="GO:0005783">
    <property type="term" value="C:endoplasmic reticulum"/>
    <property type="evidence" value="ECO:0000250"/>
    <property type="project" value="UniProtKB"/>
</dbReference>
<dbReference type="GO" id="GO:0070062">
    <property type="term" value="C:extracellular exosome"/>
    <property type="evidence" value="ECO:0007005"/>
    <property type="project" value="UniProtKB"/>
</dbReference>
<dbReference type="GO" id="GO:0031012">
    <property type="term" value="C:extracellular matrix"/>
    <property type="evidence" value="ECO:0000303"/>
    <property type="project" value="UniProtKB"/>
</dbReference>
<dbReference type="GO" id="GO:0005576">
    <property type="term" value="C:extracellular region"/>
    <property type="evidence" value="ECO:0000318"/>
    <property type="project" value="GO_Central"/>
</dbReference>
<dbReference type="GO" id="GO:0005615">
    <property type="term" value="C:extracellular space"/>
    <property type="evidence" value="ECO:0000314"/>
    <property type="project" value="UniProtKB"/>
</dbReference>
<dbReference type="GO" id="GO:0048471">
    <property type="term" value="C:perinuclear region of cytoplasm"/>
    <property type="evidence" value="ECO:0007669"/>
    <property type="project" value="UniProtKB-SubCell"/>
</dbReference>
<dbReference type="GO" id="GO:0035580">
    <property type="term" value="C:specific granule lumen"/>
    <property type="evidence" value="ECO:0000304"/>
    <property type="project" value="Reactome"/>
</dbReference>
<dbReference type="GO" id="GO:0030246">
    <property type="term" value="F:carbohydrate binding"/>
    <property type="evidence" value="ECO:0007669"/>
    <property type="project" value="UniProtKB-KW"/>
</dbReference>
<dbReference type="GO" id="GO:0008061">
    <property type="term" value="F:chitin binding"/>
    <property type="evidence" value="ECO:0000314"/>
    <property type="project" value="UniProtKB"/>
</dbReference>
<dbReference type="GO" id="GO:0005201">
    <property type="term" value="F:extracellular matrix structural constituent"/>
    <property type="evidence" value="ECO:0000303"/>
    <property type="project" value="UniProtKB"/>
</dbReference>
<dbReference type="GO" id="GO:0007250">
    <property type="term" value="P:activation of NF-kappaB-inducing kinase activity"/>
    <property type="evidence" value="ECO:0000250"/>
    <property type="project" value="UniProtKB"/>
</dbReference>
<dbReference type="GO" id="GO:0006915">
    <property type="term" value="P:apoptotic process"/>
    <property type="evidence" value="ECO:0007669"/>
    <property type="project" value="UniProtKB-KW"/>
</dbReference>
<dbReference type="GO" id="GO:0005975">
    <property type="term" value="P:carbohydrate metabolic process"/>
    <property type="evidence" value="ECO:0007669"/>
    <property type="project" value="InterPro"/>
</dbReference>
<dbReference type="GO" id="GO:0051216">
    <property type="term" value="P:cartilage development"/>
    <property type="evidence" value="ECO:0000303"/>
    <property type="project" value="UniProtKB"/>
</dbReference>
<dbReference type="GO" id="GO:0071356">
    <property type="term" value="P:cellular response to tumor necrosis factor"/>
    <property type="evidence" value="ECO:0000250"/>
    <property type="project" value="UniProtKB"/>
</dbReference>
<dbReference type="GO" id="GO:0006032">
    <property type="term" value="P:chitin catabolic process"/>
    <property type="evidence" value="ECO:0000318"/>
    <property type="project" value="GO_Central"/>
</dbReference>
<dbReference type="GO" id="GO:0006954">
    <property type="term" value="P:inflammatory response"/>
    <property type="evidence" value="ECO:0000270"/>
    <property type="project" value="UniProtKB"/>
</dbReference>
<dbReference type="GO" id="GO:0030324">
    <property type="term" value="P:lung development"/>
    <property type="evidence" value="ECO:0000315"/>
    <property type="project" value="UniProtKB"/>
</dbReference>
<dbReference type="GO" id="GO:0045766">
    <property type="term" value="P:positive regulation of angiogenesis"/>
    <property type="evidence" value="ECO:0000315"/>
    <property type="project" value="UniProtKB"/>
</dbReference>
<dbReference type="GO" id="GO:0070374">
    <property type="term" value="P:positive regulation of ERK1 and ERK2 cascade"/>
    <property type="evidence" value="ECO:0000315"/>
    <property type="project" value="UniProtKB"/>
</dbReference>
<dbReference type="GO" id="GO:0032757">
    <property type="term" value="P:positive regulation of interleukin-8 production"/>
    <property type="evidence" value="ECO:0000250"/>
    <property type="project" value="UniProtKB"/>
</dbReference>
<dbReference type="GO" id="GO:0010800">
    <property type="term" value="P:positive regulation of peptidyl-threonine phosphorylation"/>
    <property type="evidence" value="ECO:0000250"/>
    <property type="project" value="UniProtKB"/>
</dbReference>
<dbReference type="GO" id="GO:0051897">
    <property type="term" value="P:positive regulation of phosphatidylinositol 3-kinase/protein kinase B signal transduction"/>
    <property type="evidence" value="ECO:0000315"/>
    <property type="project" value="UniProtKB"/>
</dbReference>
<dbReference type="GO" id="GO:0070555">
    <property type="term" value="P:response to interleukin-1"/>
    <property type="evidence" value="ECO:0000270"/>
    <property type="project" value="UniProtKB"/>
</dbReference>
<dbReference type="GO" id="GO:0070741">
    <property type="term" value="P:response to interleukin-6"/>
    <property type="evidence" value="ECO:0000270"/>
    <property type="project" value="UniProtKB"/>
</dbReference>
<dbReference type="GO" id="GO:0009612">
    <property type="term" value="P:response to mechanical stimulus"/>
    <property type="evidence" value="ECO:0000270"/>
    <property type="project" value="UniProtKB"/>
</dbReference>
<dbReference type="GO" id="GO:0034612">
    <property type="term" value="P:response to tumor necrosis factor"/>
    <property type="evidence" value="ECO:0000270"/>
    <property type="project" value="UniProtKB"/>
</dbReference>
<dbReference type="CDD" id="cd02872">
    <property type="entry name" value="GH18_chitolectin_chitotriosidase"/>
    <property type="match status" value="1"/>
</dbReference>
<dbReference type="FunFam" id="3.10.50.10:FF:000001">
    <property type="entry name" value="Chitinase 3-like 1"/>
    <property type="match status" value="1"/>
</dbReference>
<dbReference type="FunFam" id="3.20.20.80:FF:000047">
    <property type="entry name" value="Chitinase-3-like protein 1"/>
    <property type="match status" value="1"/>
</dbReference>
<dbReference type="Gene3D" id="3.10.50.10">
    <property type="match status" value="1"/>
</dbReference>
<dbReference type="Gene3D" id="3.20.20.80">
    <property type="entry name" value="Glycosidases"/>
    <property type="match status" value="1"/>
</dbReference>
<dbReference type="InterPro" id="IPR011583">
    <property type="entry name" value="Chitinase_II/V-like_cat"/>
</dbReference>
<dbReference type="InterPro" id="IPR029070">
    <property type="entry name" value="Chitinase_insertion_sf"/>
</dbReference>
<dbReference type="InterPro" id="IPR001223">
    <property type="entry name" value="Glyco_hydro18_cat"/>
</dbReference>
<dbReference type="InterPro" id="IPR017853">
    <property type="entry name" value="Glycoside_hydrolase_SF"/>
</dbReference>
<dbReference type="InterPro" id="IPR050314">
    <property type="entry name" value="Glycosyl_Hydrlase_18"/>
</dbReference>
<dbReference type="PANTHER" id="PTHR11177">
    <property type="entry name" value="CHITINASE"/>
    <property type="match status" value="1"/>
</dbReference>
<dbReference type="PANTHER" id="PTHR11177:SF202">
    <property type="entry name" value="CHITINASE-3-LIKE PROTEIN 1"/>
    <property type="match status" value="1"/>
</dbReference>
<dbReference type="Pfam" id="PF00704">
    <property type="entry name" value="Glyco_hydro_18"/>
    <property type="match status" value="1"/>
</dbReference>
<dbReference type="SMART" id="SM00636">
    <property type="entry name" value="Glyco_18"/>
    <property type="match status" value="1"/>
</dbReference>
<dbReference type="SUPFAM" id="SSF51445">
    <property type="entry name" value="(Trans)glycosidases"/>
    <property type="match status" value="1"/>
</dbReference>
<dbReference type="SUPFAM" id="SSF54556">
    <property type="entry name" value="Chitinase insertion domain"/>
    <property type="match status" value="1"/>
</dbReference>
<dbReference type="PROSITE" id="PS51910">
    <property type="entry name" value="GH18_2"/>
    <property type="match status" value="1"/>
</dbReference>
<protein>
    <recommendedName>
        <fullName>Chitinase-3-like protein 1</fullName>
    </recommendedName>
    <alternativeName>
        <fullName>39 kDa synovial protein</fullName>
    </alternativeName>
    <alternativeName>
        <fullName>Cartilage glycoprotein 39</fullName>
        <shortName>CGP-39</shortName>
        <shortName>GP-39</shortName>
        <shortName>hCGP-39</shortName>
    </alternativeName>
    <alternativeName>
        <fullName>YKL-40</fullName>
    </alternativeName>
</protein>
<keyword id="KW-0002">3D-structure</keyword>
<keyword id="KW-0929">Antimicrobial</keyword>
<keyword id="KW-0053">Apoptosis</keyword>
<keyword id="KW-1058">Asthma</keyword>
<keyword id="KW-0963">Cytoplasm</keyword>
<keyword id="KW-0903">Direct protein sequencing</keyword>
<keyword id="KW-1015">Disulfide bond</keyword>
<keyword id="KW-0256">Endoplasmic reticulum</keyword>
<keyword id="KW-0325">Glycoprotein</keyword>
<keyword id="KW-0395">Inflammatory response</keyword>
<keyword id="KW-0430">Lectin</keyword>
<keyword id="KW-1267">Proteomics identification</keyword>
<keyword id="KW-1185">Reference proteome</keyword>
<keyword id="KW-1211">Schizophrenia</keyword>
<keyword id="KW-0964">Secreted</keyword>
<keyword id="KW-0732">Signal</keyword>
<reference key="1">
    <citation type="journal article" date="1993" name="J. Biol. Chem.">
        <title>Human cartilage gp-39, a major secretory product of articular chondrocytes and synovial cells, is a mammalian member of a chitinase protein family.</title>
        <authorList>
            <person name="Hakala B.E."/>
            <person name="White C."/>
            <person name="Recklies A.D."/>
        </authorList>
    </citation>
    <scope>NUCLEOTIDE SEQUENCE [MRNA]</scope>
    <scope>PARTIAL PROTEIN SEQUENCE</scope>
    <scope>VARIANT THR-311</scope>
    <source>
        <tissue>Cartilage</tissue>
    </source>
</reference>
<reference key="2">
    <citation type="journal article" date="1997" name="Genomics">
        <title>Molecular characterization of the gene for human cartilage gp-39 (CHI3L1), a member of the chitinase protein family and marker for late stages of macrophage differentiation.</title>
        <authorList>
            <person name="Rehli M."/>
            <person name="Krause S.W."/>
            <person name="Andressen R."/>
        </authorList>
    </citation>
    <scope>NUCLEOTIDE SEQUENCE [GENOMIC DNA]</scope>
    <scope>VARIANT THR-311</scope>
    <source>
        <tissue>Blood</tissue>
    </source>
</reference>
<reference key="3">
    <citation type="submission" date="2003-05" db="EMBL/GenBank/DDBJ databases">
        <title>Cloning of human full-length CDSs in BD Creator(TM) system donor vector.</title>
        <authorList>
            <person name="Kalnine N."/>
            <person name="Chen X."/>
            <person name="Rolfs A."/>
            <person name="Halleck A."/>
            <person name="Hines L."/>
            <person name="Eisenstein S."/>
            <person name="Koundinya M."/>
            <person name="Raphael J."/>
            <person name="Moreira D."/>
            <person name="Kelley T."/>
            <person name="LaBaer J."/>
            <person name="Lin Y."/>
            <person name="Phelan M."/>
            <person name="Farmer A."/>
        </authorList>
    </citation>
    <scope>NUCLEOTIDE SEQUENCE [LARGE SCALE MRNA]</scope>
    <scope>VARIANT GLY-145</scope>
</reference>
<reference key="4">
    <citation type="journal article" date="2004" name="Nat. Genet.">
        <title>Complete sequencing and characterization of 21,243 full-length human cDNAs.</title>
        <authorList>
            <person name="Ota T."/>
            <person name="Suzuki Y."/>
            <person name="Nishikawa T."/>
            <person name="Otsuki T."/>
            <person name="Sugiyama T."/>
            <person name="Irie R."/>
            <person name="Wakamatsu A."/>
            <person name="Hayashi K."/>
            <person name="Sato H."/>
            <person name="Nagai K."/>
            <person name="Kimura K."/>
            <person name="Makita H."/>
            <person name="Sekine M."/>
            <person name="Obayashi M."/>
            <person name="Nishi T."/>
            <person name="Shibahara T."/>
            <person name="Tanaka T."/>
            <person name="Ishii S."/>
            <person name="Yamamoto J."/>
            <person name="Saito K."/>
            <person name="Kawai Y."/>
            <person name="Isono Y."/>
            <person name="Nakamura Y."/>
            <person name="Nagahari K."/>
            <person name="Murakami K."/>
            <person name="Yasuda T."/>
            <person name="Iwayanagi T."/>
            <person name="Wagatsuma M."/>
            <person name="Shiratori A."/>
            <person name="Sudo H."/>
            <person name="Hosoiri T."/>
            <person name="Kaku Y."/>
            <person name="Kodaira H."/>
            <person name="Kondo H."/>
            <person name="Sugawara M."/>
            <person name="Takahashi M."/>
            <person name="Kanda K."/>
            <person name="Yokoi T."/>
            <person name="Furuya T."/>
            <person name="Kikkawa E."/>
            <person name="Omura Y."/>
            <person name="Abe K."/>
            <person name="Kamihara K."/>
            <person name="Katsuta N."/>
            <person name="Sato K."/>
            <person name="Tanikawa M."/>
            <person name="Yamazaki M."/>
            <person name="Ninomiya K."/>
            <person name="Ishibashi T."/>
            <person name="Yamashita H."/>
            <person name="Murakawa K."/>
            <person name="Fujimori K."/>
            <person name="Tanai H."/>
            <person name="Kimata M."/>
            <person name="Watanabe M."/>
            <person name="Hiraoka S."/>
            <person name="Chiba Y."/>
            <person name="Ishida S."/>
            <person name="Ono Y."/>
            <person name="Takiguchi S."/>
            <person name="Watanabe S."/>
            <person name="Yosida M."/>
            <person name="Hotuta T."/>
            <person name="Kusano J."/>
            <person name="Kanehori K."/>
            <person name="Takahashi-Fujii A."/>
            <person name="Hara H."/>
            <person name="Tanase T.-O."/>
            <person name="Nomura Y."/>
            <person name="Togiya S."/>
            <person name="Komai F."/>
            <person name="Hara R."/>
            <person name="Takeuchi K."/>
            <person name="Arita M."/>
            <person name="Imose N."/>
            <person name="Musashino K."/>
            <person name="Yuuki H."/>
            <person name="Oshima A."/>
            <person name="Sasaki N."/>
            <person name="Aotsuka S."/>
            <person name="Yoshikawa Y."/>
            <person name="Matsunawa H."/>
            <person name="Ichihara T."/>
            <person name="Shiohata N."/>
            <person name="Sano S."/>
            <person name="Moriya S."/>
            <person name="Momiyama H."/>
            <person name="Satoh N."/>
            <person name="Takami S."/>
            <person name="Terashima Y."/>
            <person name="Suzuki O."/>
            <person name="Nakagawa S."/>
            <person name="Senoh A."/>
            <person name="Mizoguchi H."/>
            <person name="Goto Y."/>
            <person name="Shimizu F."/>
            <person name="Wakebe H."/>
            <person name="Hishigaki H."/>
            <person name="Watanabe T."/>
            <person name="Sugiyama A."/>
            <person name="Takemoto M."/>
            <person name="Kawakami B."/>
            <person name="Yamazaki M."/>
            <person name="Watanabe K."/>
            <person name="Kumagai A."/>
            <person name="Itakura S."/>
            <person name="Fukuzumi Y."/>
            <person name="Fujimori Y."/>
            <person name="Komiyama M."/>
            <person name="Tashiro H."/>
            <person name="Tanigami A."/>
            <person name="Fujiwara T."/>
            <person name="Ono T."/>
            <person name="Yamada K."/>
            <person name="Fujii Y."/>
            <person name="Ozaki K."/>
            <person name="Hirao M."/>
            <person name="Ohmori Y."/>
            <person name="Kawabata A."/>
            <person name="Hikiji T."/>
            <person name="Kobatake N."/>
            <person name="Inagaki H."/>
            <person name="Ikema Y."/>
            <person name="Okamoto S."/>
            <person name="Okitani R."/>
            <person name="Kawakami T."/>
            <person name="Noguchi S."/>
            <person name="Itoh T."/>
            <person name="Shigeta K."/>
            <person name="Senba T."/>
            <person name="Matsumura K."/>
            <person name="Nakajima Y."/>
            <person name="Mizuno T."/>
            <person name="Morinaga M."/>
            <person name="Sasaki M."/>
            <person name="Togashi T."/>
            <person name="Oyama M."/>
            <person name="Hata H."/>
            <person name="Watanabe M."/>
            <person name="Komatsu T."/>
            <person name="Mizushima-Sugano J."/>
            <person name="Satoh T."/>
            <person name="Shirai Y."/>
            <person name="Takahashi Y."/>
            <person name="Nakagawa K."/>
            <person name="Okumura K."/>
            <person name="Nagase T."/>
            <person name="Nomura N."/>
            <person name="Kikuchi H."/>
            <person name="Masuho Y."/>
            <person name="Yamashita R."/>
            <person name="Nakai K."/>
            <person name="Yada T."/>
            <person name="Nakamura Y."/>
            <person name="Ohara O."/>
            <person name="Isogai T."/>
            <person name="Sugano S."/>
        </authorList>
    </citation>
    <scope>NUCLEOTIDE SEQUENCE [LARGE SCALE MRNA]</scope>
</reference>
<reference key="5">
    <citation type="submission" date="2005-07" db="EMBL/GenBank/DDBJ databases">
        <authorList>
            <person name="Mural R.J."/>
            <person name="Istrail S."/>
            <person name="Sutton G.G."/>
            <person name="Florea L."/>
            <person name="Halpern A.L."/>
            <person name="Mobarry C.M."/>
            <person name="Lippert R."/>
            <person name="Walenz B."/>
            <person name="Shatkay H."/>
            <person name="Dew I."/>
            <person name="Miller J.R."/>
            <person name="Flanigan M.J."/>
            <person name="Edwards N.J."/>
            <person name="Bolanos R."/>
            <person name="Fasulo D."/>
            <person name="Halldorsson B.V."/>
            <person name="Hannenhalli S."/>
            <person name="Turner R."/>
            <person name="Yooseph S."/>
            <person name="Lu F."/>
            <person name="Nusskern D.R."/>
            <person name="Shue B.C."/>
            <person name="Zheng X.H."/>
            <person name="Zhong F."/>
            <person name="Delcher A.L."/>
            <person name="Huson D.H."/>
            <person name="Kravitz S.A."/>
            <person name="Mouchard L."/>
            <person name="Reinert K."/>
            <person name="Remington K.A."/>
            <person name="Clark A.G."/>
            <person name="Waterman M.S."/>
            <person name="Eichler E.E."/>
            <person name="Adams M.D."/>
            <person name="Hunkapiller M.W."/>
            <person name="Myers E.W."/>
            <person name="Venter J.C."/>
        </authorList>
    </citation>
    <scope>NUCLEOTIDE SEQUENCE [LARGE SCALE GENOMIC DNA]</scope>
</reference>
<reference key="6">
    <citation type="journal article" date="2004" name="Genome Res.">
        <title>The status, quality, and expansion of the NIH full-length cDNA project: the Mammalian Gene Collection (MGC).</title>
        <authorList>
            <consortium name="The MGC Project Team"/>
        </authorList>
    </citation>
    <scope>NUCLEOTIDE SEQUENCE [LARGE SCALE MRNA]</scope>
    <scope>VARIANT GLY-145</scope>
    <source>
        <tissue>Brain</tissue>
    </source>
</reference>
<reference key="7">
    <citation type="journal article" date="1990" name="Biochem. J.">
        <title>Human synovial cells secrete a 39 kDa protein similar to a bovine mammary protein expressed during the non-lactating period.</title>
        <authorList>
            <person name="Nyirkos P."/>
            <person name="Golds E.E."/>
        </authorList>
    </citation>
    <scope>PROTEIN SEQUENCE OF 22-45</scope>
</reference>
<reference key="8">
    <citation type="journal article" date="1998" name="Eur. J. Biochem.">
        <title>Chitotriosidase, a chitinase, and the 39-kDa human cartilage glycoprotein, a chitin-binding lectin, are homologues of family 18 glycosyl hydrolases secreted by human macrophages.</title>
        <authorList>
            <person name="Renkema G.H."/>
            <person name="Boot R.G."/>
            <person name="Au F.L."/>
            <person name="Donker-Koopman W.E."/>
            <person name="Strijland A."/>
            <person name="Muijsers A.O."/>
            <person name="Hrebicek M."/>
            <person name="Aerts J.M.F.G."/>
        </authorList>
    </citation>
    <scope>PROTEIN SEQUENCE OF N-TERMINUS</scope>
    <scope>FUNCTION</scope>
    <scope>SUBCELLULAR LOCATION</scope>
    <scope>TISSUE SPECIFICITY</scope>
</reference>
<reference key="9">
    <citation type="journal article" date="2006" name="Gastroenterology">
        <title>Chitinase 3-like-1 exacerbates intestinal inflammation by enhancing bacterial adhesion and invasion in colonic epithelial cells.</title>
        <authorList>
            <person name="Mizoguchi E."/>
        </authorList>
    </citation>
    <scope>FUNCTION</scope>
    <scope>TISSUE SPECIFICITY</scope>
    <scope>INDUCTION</scope>
</reference>
<reference key="10">
    <citation type="journal article" date="2007" name="Am. J. Hum. Genet.">
        <title>Functional variants in the promoter region of Chitinase 3-like 1 (CHI3L1) and susceptibility to schizophrenia.</title>
        <authorList>
            <person name="Zhao X."/>
            <person name="Tang R."/>
            <person name="Gao B."/>
            <person name="Shi Y."/>
            <person name="Zhou J."/>
            <person name="Guo S."/>
            <person name="Zhang J."/>
            <person name="Wang Y."/>
            <person name="Tang W."/>
            <person name="Meng J."/>
            <person name="Li S."/>
            <person name="Wang H."/>
            <person name="Ma G."/>
            <person name="Lin C."/>
            <person name="Xiao Y."/>
            <person name="Feng G."/>
            <person name="Lin Z."/>
            <person name="Zhu S."/>
            <person name="Xing Y."/>
            <person name="Sang H."/>
            <person name="St Clair D."/>
            <person name="He L."/>
        </authorList>
    </citation>
    <scope>INVOLVEMENT IN SCZD</scope>
</reference>
<reference key="11">
    <citation type="journal article" date="2009" name="J. Exp. Med.">
        <title>Role of breast regression protein 39 (BRP-39)/chitinase 3-like-1 in Th2 and IL-13-induced tissue responses and apoptosis.</title>
        <authorList>
            <person name="Lee C.G."/>
            <person name="Hartl D."/>
            <person name="Lee G.R."/>
            <person name="Koller B."/>
            <person name="Matsuura H."/>
            <person name="Da Silva C.A."/>
            <person name="Sohn M.H."/>
            <person name="Cohn L."/>
            <person name="Homer R.J."/>
            <person name="Kozhich A.A."/>
            <person name="Humbles A."/>
            <person name="Kearley J."/>
            <person name="Coyle A."/>
            <person name="Chupp G."/>
            <person name="Reed J."/>
            <person name="Flavell R.A."/>
            <person name="Elias J.A."/>
        </authorList>
    </citation>
    <scope>FUNCTION</scope>
</reference>
<reference key="12">
    <citation type="journal article" date="2010" name="Am. J. Respir. Crit. Care Med.">
        <title>The chitinase-like proteins breast regression protein-39 and YKL-40 regulate hyperoxia-induced acute lung injury.</title>
        <authorList>
            <person name="Sohn M.H."/>
            <person name="Kang M.J."/>
            <person name="Matsuura H."/>
            <person name="Bhandari V."/>
            <person name="Chen N.Y."/>
            <person name="Lee C.G."/>
            <person name="Elias J.A."/>
        </authorList>
    </citation>
    <scope>FUNCTION</scope>
    <scope>INDUCTION</scope>
</reference>
<reference key="13">
    <citation type="journal article" date="2010" name="Schizophr. Res.">
        <title>The chitinase 3-like 1 gene and schizophrenia: evidence from a multi-center case-control study and meta-analysis.</title>
        <authorList>
            <person name="Ohi K."/>
            <person name="Hashimoto R."/>
            <person name="Yasuda Y."/>
            <person name="Yoshida T."/>
            <person name="Takahashi H."/>
            <person name="Iike N."/>
            <person name="Iwase M."/>
            <person name="Kamino K."/>
            <person name="Ishii R."/>
            <person name="Kazui H."/>
            <person name="Fukumoto M."/>
            <person name="Takamura H."/>
            <person name="Yamamori H."/>
            <person name="Azechi M."/>
            <person name="Ikezawa K."/>
            <person name="Tanimukai H."/>
            <person name="Tagami S."/>
            <person name="Morihara T."/>
            <person name="Okochi M."/>
            <person name="Yamada K."/>
            <person name="Numata S."/>
            <person name="Ikeda M."/>
            <person name="Tanaka T."/>
            <person name="Kudo T."/>
            <person name="Ueno S."/>
            <person name="Yoshikawa T."/>
            <person name="Ohmori T."/>
            <person name="Iwata N."/>
            <person name="Ozaki N."/>
            <person name="Takeda M."/>
        </authorList>
    </citation>
    <scope>INVOLVEMENT IN SCZD</scope>
</reference>
<reference key="14">
    <citation type="journal article" date="2003" name="J. Biol. Chem.">
        <title>Structure and ligand-induced conformational change of the 39-kDa glycoprotein from human articular chondrocytes.</title>
        <authorList>
            <person name="Houston D.R."/>
            <person name="Recklies A.D."/>
            <person name="Krupa J.C."/>
            <person name="van Aalten D.M.F."/>
        </authorList>
    </citation>
    <scope>X-RAY CRYSTALLOGRAPHY (1.85 ANGSTROMS) OF 22-383 IN COMPLEX WITH CHITIN OLIGOMERS</scope>
    <scope>DISULFIDE BONDS</scope>
    <scope>GLYCOSYLATION AT ASN-60</scope>
</reference>
<reference key="15">
    <citation type="journal article" date="2003" name="J. Biol. Chem.">
        <title>Crystal structure and carbohydrate-binding properties of the human cartilage glycoprotein-39.</title>
        <authorList>
            <person name="Fusetti F."/>
            <person name="Pijning T."/>
            <person name="Kalk K.H."/>
            <person name="Bos E."/>
            <person name="Dijkstra B.W."/>
        </authorList>
    </citation>
    <scope>X-RAY CRYSTALLOGRAPHY (2.7 ANGSTROMS) OF 22-383 IN COMPLEX WITH CHITIN OLIGOMERS</scope>
    <scope>DISULFIDE BONDS</scope>
</reference>
<reference key="16">
    <citation type="journal article" date="2008" name="N. Engl. J. Med.">
        <title>Effect of variation in CHI3L1 on serum YKL-40 level, risk of asthma, and lung function.</title>
        <authorList>
            <person name="Ober C."/>
            <person name="Tan Z."/>
            <person name="Sun Y."/>
            <person name="Possick J.D."/>
            <person name="Pan L."/>
            <person name="Nicolae R."/>
            <person name="Radford S."/>
            <person name="Parry R.R."/>
            <person name="Heinzmann A."/>
            <person name="Deichmann K.A."/>
            <person name="Lester L.A."/>
            <person name="Gern J.E."/>
            <person name="Lemanske R.F. Jr."/>
            <person name="Nicolae D.L."/>
            <person name="Elias J.A."/>
            <person name="Chupp G.L."/>
        </authorList>
    </citation>
    <scope>INVOLVEMENT IN SUSCEPTIBILITY TO ASRT7</scope>
</reference>
<proteinExistence type="evidence at protein level"/>
<evidence type="ECO:0000250" key="1"/>
<evidence type="ECO:0000255" key="2">
    <source>
        <dbReference type="PROSITE-ProRule" id="PRU01258"/>
    </source>
</evidence>
<evidence type="ECO:0000269" key="3">
    <source>
    </source>
</evidence>
<evidence type="ECO:0000269" key="4">
    <source>
    </source>
</evidence>
<evidence type="ECO:0000269" key="5">
    <source>
    </source>
</evidence>
<evidence type="ECO:0000269" key="6">
    <source>
    </source>
</evidence>
<evidence type="ECO:0000269" key="7">
    <source>
    </source>
</evidence>
<evidence type="ECO:0000269" key="8">
    <source>
    </source>
</evidence>
<evidence type="ECO:0000269" key="9">
    <source>
    </source>
</evidence>
<evidence type="ECO:0000269" key="10">
    <source>
    </source>
</evidence>
<evidence type="ECO:0000269" key="11">
    <source>
    </source>
</evidence>
<evidence type="ECO:0000269" key="12">
    <source>
    </source>
</evidence>
<evidence type="ECO:0000269" key="13">
    <source>
    </source>
</evidence>
<evidence type="ECO:0000269" key="14">
    <source>
    </source>
</evidence>
<evidence type="ECO:0000269" key="15">
    <source>
    </source>
</evidence>
<evidence type="ECO:0000269" key="16">
    <source ref="3"/>
</evidence>
<evidence type="ECO:0000305" key="17"/>
<evidence type="ECO:0007829" key="18">
    <source>
        <dbReference type="PDB" id="1HJX"/>
    </source>
</evidence>
<evidence type="ECO:0007829" key="19">
    <source>
        <dbReference type="PDB" id="1NWU"/>
    </source>
</evidence>
<evidence type="ECO:0007829" key="20">
    <source>
        <dbReference type="PDB" id="8DF1"/>
    </source>
</evidence>
<evidence type="ECO:0007829" key="21">
    <source>
        <dbReference type="PDB" id="8R4X"/>
    </source>
</evidence>
<organism>
    <name type="scientific">Homo sapiens</name>
    <name type="common">Human</name>
    <dbReference type="NCBI Taxonomy" id="9606"/>
    <lineage>
        <taxon>Eukaryota</taxon>
        <taxon>Metazoa</taxon>
        <taxon>Chordata</taxon>
        <taxon>Craniata</taxon>
        <taxon>Vertebrata</taxon>
        <taxon>Euteleostomi</taxon>
        <taxon>Mammalia</taxon>
        <taxon>Eutheria</taxon>
        <taxon>Euarchontoglires</taxon>
        <taxon>Primates</taxon>
        <taxon>Haplorrhini</taxon>
        <taxon>Catarrhini</taxon>
        <taxon>Hominidae</taxon>
        <taxon>Homo</taxon>
    </lineage>
</organism>
<name>CH3L1_HUMAN</name>
<sequence>MGVKASQTGFVVLVLLQCCSAYKLVCYYTSWSQYREGDGSCFPDALDRFLCTHIIYSFANISNDHIDTWEWNDVTLYGMLNTLKNRNPNLKTLLSVGGWNFGSQRFSKIASNTQSRRTFIKSVPPFLRTHGFDGLDLAWLYPGRRDKQHFTTLIKEMKAEFIKEAQPGKKQLLLSAALSAGKVTIDSSYDIAKISQHLDFISIMTYDFHGAWRGTTGHHSPLFRGQEDASPDRFSNTDYAVGYMLRLGAPASKLVMGIPTFGRSFTLASSETGVGAPISGPGIPGRFTKEAGTLAYYEICDFLRGATVHRILGQQVPYATKGNQWVGYDDQESVKSKVQYLKDRQLAGAMVWALDLDDFQGSFCGQDLRFPLTNAIKDALAAT</sequence>